<proteinExistence type="inferred from homology"/>
<keyword id="KW-0106">Calcium</keyword>
<keyword id="KW-0119">Carbohydrate metabolism</keyword>
<keyword id="KW-0868">Chloride</keyword>
<keyword id="KW-1015">Disulfide bond</keyword>
<keyword id="KW-0326">Glycosidase</keyword>
<keyword id="KW-0378">Hydrolase</keyword>
<keyword id="KW-0479">Metal-binding</keyword>
<keyword id="KW-0873">Pyrrolidone carboxylic acid</keyword>
<keyword id="KW-0964">Secreted</keyword>
<keyword id="KW-0732">Signal</keyword>
<name>AMYR_DROTE</name>
<comment type="catalytic activity">
    <reaction evidence="2">
        <text>Endohydrolysis of (1-&gt;4)-alpha-D-glucosidic linkages in polysaccharides containing three or more (1-&gt;4)-alpha-linked D-glucose units.</text>
        <dbReference type="EC" id="3.2.1.1"/>
    </reaction>
</comment>
<comment type="cofactor">
    <cofactor evidence="3">
        <name>Ca(2+)</name>
        <dbReference type="ChEBI" id="CHEBI:29108"/>
    </cofactor>
    <text evidence="3">Binds 1 Ca(2+) ion per subunit.</text>
</comment>
<comment type="cofactor">
    <cofactor evidence="3">
        <name>chloride</name>
        <dbReference type="ChEBI" id="CHEBI:17996"/>
    </cofactor>
    <text evidence="3">Binds 1 Cl(-) ion per subunit.</text>
</comment>
<comment type="subunit">
    <text evidence="1">Monomer.</text>
</comment>
<comment type="subcellular location">
    <subcellularLocation>
        <location evidence="5">Secreted</location>
    </subcellularLocation>
</comment>
<comment type="similarity">
    <text evidence="5">Belongs to the glycosyl hydrolase 13 family.</text>
</comment>
<feature type="signal peptide" evidence="1">
    <location>
        <begin position="1"/>
        <end position="19"/>
    </location>
</feature>
<feature type="chain" id="PRO_0000001390" description="Alpha-amylase-related protein">
    <location>
        <begin position="20"/>
        <end position="493"/>
    </location>
</feature>
<feature type="active site" description="Nucleophile" evidence="2">
    <location>
        <position position="207"/>
    </location>
</feature>
<feature type="active site" description="Proton donor" evidence="2">
    <location>
        <position position="244"/>
    </location>
</feature>
<feature type="binding site" evidence="3">
    <location>
        <position position="117"/>
    </location>
    <ligand>
        <name>Ca(2+)</name>
        <dbReference type="ChEBI" id="CHEBI:29108"/>
    </ligand>
</feature>
<feature type="binding site" evidence="3">
    <location>
        <position position="168"/>
    </location>
    <ligand>
        <name>Ca(2+)</name>
        <dbReference type="ChEBI" id="CHEBI:29108"/>
    </ligand>
</feature>
<feature type="binding site" evidence="3">
    <location>
        <position position="177"/>
    </location>
    <ligand>
        <name>Ca(2+)</name>
        <dbReference type="ChEBI" id="CHEBI:29108"/>
    </ligand>
</feature>
<feature type="binding site" evidence="3">
    <location>
        <position position="205"/>
    </location>
    <ligand>
        <name>chloride</name>
        <dbReference type="ChEBI" id="CHEBI:17996"/>
    </ligand>
</feature>
<feature type="binding site" evidence="3">
    <location>
        <position position="211"/>
    </location>
    <ligand>
        <name>Ca(2+)</name>
        <dbReference type="ChEBI" id="CHEBI:29108"/>
    </ligand>
</feature>
<feature type="binding site" evidence="3">
    <location>
        <position position="307"/>
    </location>
    <ligand>
        <name>chloride</name>
        <dbReference type="ChEBI" id="CHEBI:17996"/>
    </ligand>
</feature>
<feature type="binding site" evidence="3">
    <location>
        <position position="342"/>
    </location>
    <ligand>
        <name>chloride</name>
        <dbReference type="ChEBI" id="CHEBI:17996"/>
    </ligand>
</feature>
<feature type="site" description="Transition state stabilizer" evidence="2">
    <location>
        <position position="309"/>
    </location>
</feature>
<feature type="modified residue" description="Pyrrolidone carboxylic acid" evidence="1">
    <location>
        <position position="20"/>
    </location>
</feature>
<feature type="disulfide bond" evidence="3">
    <location>
        <begin position="47"/>
        <end position="103"/>
    </location>
</feature>
<feature type="disulfide bond" evidence="3">
    <location>
        <begin position="156"/>
        <end position="170"/>
    </location>
</feature>
<feature type="disulfide bond" evidence="3">
    <location>
        <begin position="375"/>
        <end position="381"/>
    </location>
</feature>
<feature type="disulfide bond" evidence="4">
    <location>
        <begin position="417"/>
        <end position="440"/>
    </location>
</feature>
<feature type="disulfide bond" evidence="3">
    <location>
        <begin position="447"/>
        <end position="459"/>
    </location>
</feature>
<evidence type="ECO:0000250" key="1"/>
<evidence type="ECO:0000250" key="2">
    <source>
        <dbReference type="UniProtKB" id="P04746"/>
    </source>
</evidence>
<evidence type="ECO:0000250" key="3">
    <source>
        <dbReference type="UniProtKB" id="P56634"/>
    </source>
</evidence>
<evidence type="ECO:0000255" key="4"/>
<evidence type="ECO:0000305" key="5"/>
<protein>
    <recommendedName>
        <fullName>Alpha-amylase-related protein</fullName>
        <ecNumber evidence="2">3.2.1.1</ecNumber>
    </recommendedName>
</protein>
<sequence>MFKLALTLTLCLAGSLSLAQHNPHWWGNRNTIVHLFEWKWSDIAQECESFLGPRGFAGVQVSPVNENIIAAGRPWWERYQPISYKLTTRSGNEEEFGDMVRRCNDVGVRIYVDVLLNHMSGDFDGVVVGTAGTEAEPREKSFPGVPYTAQDFHPTCEITDWNDRFQVQQCELVGLKDLDQSSDWVRSKLIEFLDHLIELGVAGFRVDAAKHMASEDLEYIYSSLSNLNIDHGFPHNSRPFIFQEVIDHGHETVSRDEYKDLGAVTEFRFSEEIGNAFRGNNALKWLQSWGTGWGFLPSGQALTFVDNHDNQRDAGAVLNYKSPKQYKMATAFHLAYPYGISRVMSSFAFDDHDTPPPQDAQERIVSPEFDEDGACVNGWICEHRWRQIYAMVGFKNAVRDTEVTGWWDNGDNQISFCRGNKGFLAINNNLYDLSQDLNTCLPEGTYCDVISGSLIDGSCTGKSVTVNEYGFGYIHIGSDDFDGVLALHVDARV</sequence>
<accession>O76260</accession>
<dbReference type="EC" id="3.2.1.1" evidence="2"/>
<dbReference type="EMBL" id="AF039557">
    <property type="protein sequence ID" value="AAC39092.2"/>
    <property type="molecule type" value="Genomic_DNA"/>
</dbReference>
<dbReference type="SMR" id="O76260"/>
<dbReference type="CAZy" id="GH13">
    <property type="family name" value="Glycoside Hydrolase Family 13"/>
</dbReference>
<dbReference type="GO" id="GO:0005576">
    <property type="term" value="C:extracellular region"/>
    <property type="evidence" value="ECO:0007669"/>
    <property type="project" value="UniProtKB-SubCell"/>
</dbReference>
<dbReference type="GO" id="GO:0004556">
    <property type="term" value="F:alpha-amylase activity"/>
    <property type="evidence" value="ECO:0007669"/>
    <property type="project" value="UniProtKB-EC"/>
</dbReference>
<dbReference type="GO" id="GO:0046872">
    <property type="term" value="F:metal ion binding"/>
    <property type="evidence" value="ECO:0007669"/>
    <property type="project" value="UniProtKB-KW"/>
</dbReference>
<dbReference type="GO" id="GO:0005975">
    <property type="term" value="P:carbohydrate metabolic process"/>
    <property type="evidence" value="ECO:0007669"/>
    <property type="project" value="InterPro"/>
</dbReference>
<dbReference type="CDD" id="cd11317">
    <property type="entry name" value="AmyAc_bac_euk_AmyA"/>
    <property type="match status" value="1"/>
</dbReference>
<dbReference type="FunFam" id="3.20.20.80:FF:000119">
    <property type="entry name" value="Alpha-amylase-related protein"/>
    <property type="match status" value="1"/>
</dbReference>
<dbReference type="FunFam" id="2.60.40.1180:FF:000020">
    <property type="entry name" value="Pancreatic alpha-amylase"/>
    <property type="match status" value="1"/>
</dbReference>
<dbReference type="Gene3D" id="3.20.20.80">
    <property type="entry name" value="Glycosidases"/>
    <property type="match status" value="1"/>
</dbReference>
<dbReference type="Gene3D" id="2.60.40.1180">
    <property type="entry name" value="Golgi alpha-mannosidase II"/>
    <property type="match status" value="1"/>
</dbReference>
<dbReference type="InterPro" id="IPR006048">
    <property type="entry name" value="A-amylase/branching_C"/>
</dbReference>
<dbReference type="InterPro" id="IPR031319">
    <property type="entry name" value="A-amylase_C"/>
</dbReference>
<dbReference type="InterPro" id="IPR006046">
    <property type="entry name" value="Alpha_amylase"/>
</dbReference>
<dbReference type="InterPro" id="IPR006047">
    <property type="entry name" value="Glyco_hydro_13_cat_dom"/>
</dbReference>
<dbReference type="InterPro" id="IPR013780">
    <property type="entry name" value="Glyco_hydro_b"/>
</dbReference>
<dbReference type="InterPro" id="IPR017853">
    <property type="entry name" value="Glycoside_hydrolase_SF"/>
</dbReference>
<dbReference type="PANTHER" id="PTHR43447">
    <property type="entry name" value="ALPHA-AMYLASE"/>
    <property type="match status" value="1"/>
</dbReference>
<dbReference type="Pfam" id="PF00128">
    <property type="entry name" value="Alpha-amylase"/>
    <property type="match status" value="1"/>
</dbReference>
<dbReference type="Pfam" id="PF02806">
    <property type="entry name" value="Alpha-amylase_C"/>
    <property type="match status" value="1"/>
</dbReference>
<dbReference type="PRINTS" id="PR00110">
    <property type="entry name" value="ALPHAAMYLASE"/>
</dbReference>
<dbReference type="SMART" id="SM00642">
    <property type="entry name" value="Aamy"/>
    <property type="match status" value="1"/>
</dbReference>
<dbReference type="SMART" id="SM00632">
    <property type="entry name" value="Aamy_C"/>
    <property type="match status" value="1"/>
</dbReference>
<dbReference type="SUPFAM" id="SSF51445">
    <property type="entry name" value="(Trans)glycosidases"/>
    <property type="match status" value="1"/>
</dbReference>
<dbReference type="SUPFAM" id="SSF51011">
    <property type="entry name" value="Glycosyl hydrolase domain"/>
    <property type="match status" value="1"/>
</dbReference>
<organism>
    <name type="scientific">Drosophila teissieri</name>
    <name type="common">Fruit fly</name>
    <dbReference type="NCBI Taxonomy" id="7243"/>
    <lineage>
        <taxon>Eukaryota</taxon>
        <taxon>Metazoa</taxon>
        <taxon>Ecdysozoa</taxon>
        <taxon>Arthropoda</taxon>
        <taxon>Hexapoda</taxon>
        <taxon>Insecta</taxon>
        <taxon>Pterygota</taxon>
        <taxon>Neoptera</taxon>
        <taxon>Endopterygota</taxon>
        <taxon>Diptera</taxon>
        <taxon>Brachycera</taxon>
        <taxon>Muscomorpha</taxon>
        <taxon>Ephydroidea</taxon>
        <taxon>Drosophilidae</taxon>
        <taxon>Drosophila</taxon>
        <taxon>Sophophora</taxon>
    </lineage>
</organism>
<gene>
    <name type="primary">Amyrel</name>
</gene>
<reference key="1">
    <citation type="submission" date="2000-09" db="EMBL/GenBank/DDBJ databases">
        <authorList>
            <person name="Da Lage J.-L."/>
        </authorList>
    </citation>
    <scope>NUCLEOTIDE SEQUENCE [GENOMIC DNA]</scope>
</reference>